<keyword id="KW-0067">ATP-binding</keyword>
<keyword id="KW-0997">Cell inner membrane</keyword>
<keyword id="KW-1003">Cell membrane</keyword>
<keyword id="KW-0201">Cytochrome c-type biogenesis</keyword>
<keyword id="KW-0472">Membrane</keyword>
<keyword id="KW-0547">Nucleotide-binding</keyword>
<keyword id="KW-1278">Translocase</keyword>
<keyword id="KW-0813">Transport</keyword>
<gene>
    <name evidence="1" type="primary">ccmA</name>
</gene>
<sequence length="208" mass="23119">MLEAKELTCARDERVLFSQLSFTVGAGNIVQIEGPNGAGKTSLLRILAGLSRPESGEILWNQTAVGRQRDIWQREMLYLGHLPGVKGVLSPLENLRFFHPDCSDEQIFDALDEVDLTGYEDAIVAQLSAGQQRRVALARLWLSQARLWILDEPLTAIDKAGVEKIMSQFASHAGRGGSVILTTHQDLPDQQDVVRKIRLTAEGRDECW</sequence>
<feature type="chain" id="PRO_0000092191" description="Cytochrome c biogenesis ATP-binding export protein CcmA">
    <location>
        <begin position="1"/>
        <end position="208"/>
    </location>
</feature>
<feature type="domain" description="ABC transporter" evidence="1">
    <location>
        <begin position="2"/>
        <end position="206"/>
    </location>
</feature>
<feature type="binding site" evidence="1">
    <location>
        <begin position="34"/>
        <end position="41"/>
    </location>
    <ligand>
        <name>ATP</name>
        <dbReference type="ChEBI" id="CHEBI:30616"/>
    </ligand>
</feature>
<name>CCMA_TATCI</name>
<evidence type="ECO:0000255" key="1">
    <source>
        <dbReference type="HAMAP-Rule" id="MF_01707"/>
    </source>
</evidence>
<comment type="function">
    <text evidence="1">Part of the ABC transporter complex CcmAB involved in the biogenesis of c-type cytochromes; once thought to export heme, this seems not to be the case, but its exact role is uncertain. Responsible for energy coupling to the transport system.</text>
</comment>
<comment type="catalytic activity">
    <reaction evidence="1">
        <text>heme b(in) + ATP + H2O = heme b(out) + ADP + phosphate + H(+)</text>
        <dbReference type="Rhea" id="RHEA:19261"/>
        <dbReference type="ChEBI" id="CHEBI:15377"/>
        <dbReference type="ChEBI" id="CHEBI:15378"/>
        <dbReference type="ChEBI" id="CHEBI:30616"/>
        <dbReference type="ChEBI" id="CHEBI:43474"/>
        <dbReference type="ChEBI" id="CHEBI:60344"/>
        <dbReference type="ChEBI" id="CHEBI:456216"/>
        <dbReference type="EC" id="7.6.2.5"/>
    </reaction>
</comment>
<comment type="subunit">
    <text evidence="1">The complex is composed of two ATP-binding proteins (CcmA) and two transmembrane proteins (CcmB).</text>
</comment>
<comment type="subcellular location">
    <subcellularLocation>
        <location evidence="1">Cell inner membrane</location>
        <topology evidence="1">Peripheral membrane protein</topology>
    </subcellularLocation>
</comment>
<comment type="similarity">
    <text evidence="1">Belongs to the ABC transporter superfamily. CcmA exporter (TC 3.A.1.107) family.</text>
</comment>
<dbReference type="EC" id="7.6.2.5" evidence="1"/>
<dbReference type="EMBL" id="AF103874">
    <property type="protein sequence ID" value="AAD19537.1"/>
    <property type="molecule type" value="Genomic_DNA"/>
</dbReference>
<dbReference type="SMR" id="Q9Z651"/>
<dbReference type="GO" id="GO:0005886">
    <property type="term" value="C:plasma membrane"/>
    <property type="evidence" value="ECO:0007669"/>
    <property type="project" value="UniProtKB-SubCell"/>
</dbReference>
<dbReference type="GO" id="GO:0015439">
    <property type="term" value="F:ABC-type heme transporter activity"/>
    <property type="evidence" value="ECO:0007669"/>
    <property type="project" value="UniProtKB-EC"/>
</dbReference>
<dbReference type="GO" id="GO:0005524">
    <property type="term" value="F:ATP binding"/>
    <property type="evidence" value="ECO:0007669"/>
    <property type="project" value="UniProtKB-KW"/>
</dbReference>
<dbReference type="GO" id="GO:0016887">
    <property type="term" value="F:ATP hydrolysis activity"/>
    <property type="evidence" value="ECO:0007669"/>
    <property type="project" value="InterPro"/>
</dbReference>
<dbReference type="GO" id="GO:0017004">
    <property type="term" value="P:cytochrome complex assembly"/>
    <property type="evidence" value="ECO:0007669"/>
    <property type="project" value="UniProtKB-KW"/>
</dbReference>
<dbReference type="CDD" id="cd03231">
    <property type="entry name" value="ABC_CcmA_heme_exporter"/>
    <property type="match status" value="1"/>
</dbReference>
<dbReference type="Gene3D" id="3.40.50.300">
    <property type="entry name" value="P-loop containing nucleotide triphosphate hydrolases"/>
    <property type="match status" value="1"/>
</dbReference>
<dbReference type="InterPro" id="IPR003593">
    <property type="entry name" value="AAA+_ATPase"/>
</dbReference>
<dbReference type="InterPro" id="IPR003439">
    <property type="entry name" value="ABC_transporter-like_ATP-bd"/>
</dbReference>
<dbReference type="InterPro" id="IPR017871">
    <property type="entry name" value="ABC_transporter-like_CS"/>
</dbReference>
<dbReference type="InterPro" id="IPR005895">
    <property type="entry name" value="ABC_transptr_haem_export_CcmA"/>
</dbReference>
<dbReference type="InterPro" id="IPR027417">
    <property type="entry name" value="P-loop_NTPase"/>
</dbReference>
<dbReference type="NCBIfam" id="TIGR01189">
    <property type="entry name" value="ccmA"/>
    <property type="match status" value="1"/>
</dbReference>
<dbReference type="NCBIfam" id="NF010061">
    <property type="entry name" value="PRK13538.1"/>
    <property type="match status" value="1"/>
</dbReference>
<dbReference type="PANTHER" id="PTHR43499">
    <property type="entry name" value="ABC TRANSPORTER I FAMILY MEMBER 1"/>
    <property type="match status" value="1"/>
</dbReference>
<dbReference type="PANTHER" id="PTHR43499:SF1">
    <property type="entry name" value="ABC TRANSPORTER I FAMILY MEMBER 1"/>
    <property type="match status" value="1"/>
</dbReference>
<dbReference type="Pfam" id="PF00005">
    <property type="entry name" value="ABC_tran"/>
    <property type="match status" value="1"/>
</dbReference>
<dbReference type="SMART" id="SM00382">
    <property type="entry name" value="AAA"/>
    <property type="match status" value="1"/>
</dbReference>
<dbReference type="SUPFAM" id="SSF52540">
    <property type="entry name" value="P-loop containing nucleoside triphosphate hydrolases"/>
    <property type="match status" value="1"/>
</dbReference>
<dbReference type="PROSITE" id="PS00211">
    <property type="entry name" value="ABC_TRANSPORTER_1"/>
    <property type="match status" value="1"/>
</dbReference>
<dbReference type="PROSITE" id="PS50893">
    <property type="entry name" value="ABC_TRANSPORTER_2"/>
    <property type="match status" value="1"/>
</dbReference>
<dbReference type="PROSITE" id="PS51243">
    <property type="entry name" value="CCMA"/>
    <property type="match status" value="1"/>
</dbReference>
<accession>Q9Z651</accession>
<protein>
    <recommendedName>
        <fullName evidence="1">Cytochrome c biogenesis ATP-binding export protein CcmA</fullName>
        <ecNumber evidence="1">7.6.2.5</ecNumber>
    </recommendedName>
    <alternativeName>
        <fullName evidence="1">Heme exporter protein A</fullName>
    </alternativeName>
</protein>
<organism>
    <name type="scientific">Tatumella citrea</name>
    <name type="common">Pantoea citrea</name>
    <dbReference type="NCBI Taxonomy" id="53336"/>
    <lineage>
        <taxon>Bacteria</taxon>
        <taxon>Pseudomonadati</taxon>
        <taxon>Pseudomonadota</taxon>
        <taxon>Gammaproteobacteria</taxon>
        <taxon>Enterobacterales</taxon>
        <taxon>Erwiniaceae</taxon>
        <taxon>Tatumella</taxon>
    </lineage>
</organism>
<reference key="1">
    <citation type="journal article" date="2000" name="J. Bacteriol.">
        <title>Genetic and biochemical characterization of the pathway in Pantoea citrea leading to pink disease of pineapple.</title>
        <authorList>
            <person name="Pujol C.J."/>
            <person name="Kado C.I."/>
        </authorList>
    </citation>
    <scope>NUCLEOTIDE SEQUENCE [GENOMIC DNA]</scope>
    <source>
        <strain>1056R</strain>
    </source>
</reference>
<proteinExistence type="inferred from homology"/>